<feature type="chain" id="PRO_0000342824" description="Putative pentatricopeptide repeat-containing protein At1g56570">
    <location>
        <begin position="1"/>
        <end position="611"/>
    </location>
</feature>
<feature type="repeat" description="PPR 1">
    <location>
        <begin position="44"/>
        <end position="74"/>
    </location>
</feature>
<feature type="repeat" description="PPR 2">
    <location>
        <begin position="75"/>
        <end position="109"/>
    </location>
</feature>
<feature type="repeat" description="PPR 3">
    <location>
        <begin position="110"/>
        <end position="144"/>
    </location>
</feature>
<feature type="repeat" description="PPR 4">
    <location>
        <begin position="145"/>
        <end position="176"/>
    </location>
</feature>
<feature type="repeat" description="PPR 5">
    <location>
        <begin position="177"/>
        <end position="211"/>
    </location>
</feature>
<feature type="repeat" description="PPR 6">
    <location>
        <begin position="212"/>
        <end position="246"/>
    </location>
</feature>
<feature type="repeat" description="PPR 7">
    <location>
        <begin position="247"/>
        <end position="281"/>
    </location>
</feature>
<feature type="repeat" description="PPR 8">
    <location>
        <begin position="282"/>
        <end position="311"/>
    </location>
</feature>
<feature type="repeat" description="PPR 9">
    <location>
        <begin position="312"/>
        <end position="346"/>
    </location>
</feature>
<feature type="repeat" description="PPR 10">
    <location>
        <begin position="347"/>
        <end position="377"/>
    </location>
</feature>
<feature type="repeat" description="PPR 11">
    <location>
        <begin position="379"/>
        <end position="413"/>
    </location>
</feature>
<feature type="repeat" description="PPR 12">
    <location>
        <begin position="414"/>
        <end position="444"/>
    </location>
</feature>
<feature type="repeat" description="PPR 13">
    <location>
        <begin position="450"/>
        <end position="480"/>
    </location>
</feature>
<feature type="region of interest" description="Type E motif">
    <location>
        <begin position="485"/>
        <end position="561"/>
    </location>
</feature>
<feature type="region of interest" description="Type E(+) motif">
    <location>
        <begin position="562"/>
        <end position="592"/>
    </location>
</feature>
<organism>
    <name type="scientific">Arabidopsis thaliana</name>
    <name type="common">Mouse-ear cress</name>
    <dbReference type="NCBI Taxonomy" id="3702"/>
    <lineage>
        <taxon>Eukaryota</taxon>
        <taxon>Viridiplantae</taxon>
        <taxon>Streptophyta</taxon>
        <taxon>Embryophyta</taxon>
        <taxon>Tracheophyta</taxon>
        <taxon>Spermatophyta</taxon>
        <taxon>Magnoliopsida</taxon>
        <taxon>eudicotyledons</taxon>
        <taxon>Gunneridae</taxon>
        <taxon>Pentapetalae</taxon>
        <taxon>rosids</taxon>
        <taxon>malvids</taxon>
        <taxon>Brassicales</taxon>
        <taxon>Brassicaceae</taxon>
        <taxon>Camelineae</taxon>
        <taxon>Arabidopsis</taxon>
    </lineage>
</organism>
<proteinExistence type="inferred from homology"/>
<protein>
    <recommendedName>
        <fullName>Putative pentatricopeptide repeat-containing protein At1g56570</fullName>
    </recommendedName>
</protein>
<accession>Q9FXA9</accession>
<evidence type="ECO:0000305" key="1"/>
<gene>
    <name type="primary">PCMP-E64</name>
    <name type="ordered locus">At1g56570</name>
    <name type="ORF">F25P12.98</name>
</gene>
<keyword id="KW-1185">Reference proteome</keyword>
<keyword id="KW-0677">Repeat</keyword>
<dbReference type="EMBL" id="AC009323">
    <property type="protein sequence ID" value="AAG09106.1"/>
    <property type="molecule type" value="Genomic_DNA"/>
</dbReference>
<dbReference type="EMBL" id="CP002684">
    <property type="protein sequence ID" value="AEE33410.1"/>
    <property type="molecule type" value="Genomic_DNA"/>
</dbReference>
<dbReference type="EMBL" id="CP002684">
    <property type="protein sequence ID" value="ANM60848.1"/>
    <property type="molecule type" value="Genomic_DNA"/>
</dbReference>
<dbReference type="PIR" id="D96607">
    <property type="entry name" value="D96607"/>
</dbReference>
<dbReference type="RefSeq" id="NP_001319256.1">
    <property type="nucleotide sequence ID" value="NM_001333790.1"/>
</dbReference>
<dbReference type="RefSeq" id="NP_176050.1">
    <property type="nucleotide sequence ID" value="NM_104534.2"/>
</dbReference>
<dbReference type="SMR" id="Q9FXA9"/>
<dbReference type="FunCoup" id="Q9FXA9">
    <property type="interactions" value="380"/>
</dbReference>
<dbReference type="STRING" id="3702.Q9FXA9"/>
<dbReference type="iPTMnet" id="Q9FXA9"/>
<dbReference type="PaxDb" id="3702-AT1G56570.1"/>
<dbReference type="ProteomicsDB" id="234794"/>
<dbReference type="EnsemblPlants" id="AT1G56570.1">
    <property type="protein sequence ID" value="AT1G56570.1"/>
    <property type="gene ID" value="AT1G56570"/>
</dbReference>
<dbReference type="EnsemblPlants" id="AT1G56570.2">
    <property type="protein sequence ID" value="AT1G56570.2"/>
    <property type="gene ID" value="AT1G56570"/>
</dbReference>
<dbReference type="GeneID" id="842111"/>
<dbReference type="Gramene" id="AT1G56570.1">
    <property type="protein sequence ID" value="AT1G56570.1"/>
    <property type="gene ID" value="AT1G56570"/>
</dbReference>
<dbReference type="Gramene" id="AT1G56570.2">
    <property type="protein sequence ID" value="AT1G56570.2"/>
    <property type="gene ID" value="AT1G56570"/>
</dbReference>
<dbReference type="KEGG" id="ath:AT1G56570"/>
<dbReference type="Araport" id="AT1G56570"/>
<dbReference type="TAIR" id="AT1G56570">
    <property type="gene designation" value="PGN"/>
</dbReference>
<dbReference type="eggNOG" id="KOG4197">
    <property type="taxonomic scope" value="Eukaryota"/>
</dbReference>
<dbReference type="HOGENOM" id="CLU_002706_0_1_1"/>
<dbReference type="InParanoid" id="Q9FXA9"/>
<dbReference type="OMA" id="GWNFFRS"/>
<dbReference type="PhylomeDB" id="Q9FXA9"/>
<dbReference type="PRO" id="PR:Q9FXA9"/>
<dbReference type="Proteomes" id="UP000006548">
    <property type="component" value="Chromosome 1"/>
</dbReference>
<dbReference type="ExpressionAtlas" id="Q9FXA9">
    <property type="expression patterns" value="baseline and differential"/>
</dbReference>
<dbReference type="GO" id="GO:0005739">
    <property type="term" value="C:mitochondrion"/>
    <property type="evidence" value="ECO:0000314"/>
    <property type="project" value="TAIR"/>
</dbReference>
<dbReference type="GO" id="GO:0003723">
    <property type="term" value="F:RNA binding"/>
    <property type="evidence" value="ECO:0007669"/>
    <property type="project" value="InterPro"/>
</dbReference>
<dbReference type="GO" id="GO:0050832">
    <property type="term" value="P:defense response to fungus"/>
    <property type="evidence" value="ECO:0000315"/>
    <property type="project" value="TAIR"/>
</dbReference>
<dbReference type="GO" id="GO:0009737">
    <property type="term" value="P:response to abscisic acid"/>
    <property type="evidence" value="ECO:0000315"/>
    <property type="project" value="TAIR"/>
</dbReference>
<dbReference type="GO" id="GO:0009749">
    <property type="term" value="P:response to glucose"/>
    <property type="evidence" value="ECO:0000315"/>
    <property type="project" value="TAIR"/>
</dbReference>
<dbReference type="GO" id="GO:0009651">
    <property type="term" value="P:response to salt stress"/>
    <property type="evidence" value="ECO:0000315"/>
    <property type="project" value="TAIR"/>
</dbReference>
<dbReference type="GO" id="GO:0009451">
    <property type="term" value="P:RNA modification"/>
    <property type="evidence" value="ECO:0007669"/>
    <property type="project" value="InterPro"/>
</dbReference>
<dbReference type="FunFam" id="1.25.40.10:FF:001232">
    <property type="entry name" value="Pentatricopeptide repeat-containing protein At5g52850, chloroplastic"/>
    <property type="match status" value="1"/>
</dbReference>
<dbReference type="FunFam" id="1.25.40.10:FF:000797">
    <property type="entry name" value="Pentatricopeptide repeat-containing protein chloroplastic"/>
    <property type="match status" value="1"/>
</dbReference>
<dbReference type="FunFam" id="1.25.40.10:FF:001815">
    <property type="entry name" value="Putative pentatricopeptide repeat-containing protein At1g56570"/>
    <property type="match status" value="1"/>
</dbReference>
<dbReference type="FunFam" id="1.25.40.10:FF:001713">
    <property type="entry name" value="Putative pentatricopeptide repeat-containing protein, mitochondrial"/>
    <property type="match status" value="1"/>
</dbReference>
<dbReference type="Gene3D" id="1.25.40.10">
    <property type="entry name" value="Tetratricopeptide repeat domain"/>
    <property type="match status" value="5"/>
</dbReference>
<dbReference type="InterPro" id="IPR046848">
    <property type="entry name" value="E_motif"/>
</dbReference>
<dbReference type="InterPro" id="IPR002885">
    <property type="entry name" value="Pentatricopeptide_rpt"/>
</dbReference>
<dbReference type="InterPro" id="IPR046960">
    <property type="entry name" value="PPR_At4g14850-like_plant"/>
</dbReference>
<dbReference type="InterPro" id="IPR011990">
    <property type="entry name" value="TPR-like_helical_dom_sf"/>
</dbReference>
<dbReference type="NCBIfam" id="TIGR00756">
    <property type="entry name" value="PPR"/>
    <property type="match status" value="6"/>
</dbReference>
<dbReference type="PANTHER" id="PTHR47926">
    <property type="entry name" value="PENTATRICOPEPTIDE REPEAT-CONTAINING PROTEIN"/>
    <property type="match status" value="1"/>
</dbReference>
<dbReference type="Pfam" id="PF20431">
    <property type="entry name" value="E_motif"/>
    <property type="match status" value="1"/>
</dbReference>
<dbReference type="Pfam" id="PF01535">
    <property type="entry name" value="PPR"/>
    <property type="match status" value="5"/>
</dbReference>
<dbReference type="Pfam" id="PF12854">
    <property type="entry name" value="PPR_1"/>
    <property type="match status" value="1"/>
</dbReference>
<dbReference type="Pfam" id="PF13041">
    <property type="entry name" value="PPR_2"/>
    <property type="match status" value="1"/>
</dbReference>
<dbReference type="PROSITE" id="PS51375">
    <property type="entry name" value="PPR"/>
    <property type="match status" value="10"/>
</dbReference>
<sequence length="611" mass="68278">MSITKLARSNAFKPIPNFVRSSLRNAGVESSQNTEYPPYKPKKHHILATNLIVSYFEKGLVEEARSLFDEMPDRDVVAWTAMITGYASSNYNARAWECFHEMVKQGTSPNEFTLSSVLKSCRNMKVLAYGALVHGVVVKLGMEGSLYVDNAMMNMYATCSVTMEAACLIFRDIKVKNDVTWTTLITGFTHLGDGIGGLKMYKQMLLENAEVTPYCITIAVRASASIDSVTTGKQIHASVIKRGFQSNLPVMNSILDLYCRCGYLSEAKHYFHEMEDKDLITWNTLISELERSDSSEALLMFQRFESQGFVPNCYTFTSLVAACANIAALNCGQQLHGRIFRRGFNKNVELANALIDMYAKCGNIPDSQRVFGEIVDRRNLVSWTSMMIGYGSHGYGAEAVELFDKMVSSGIRPDRIVFMAVLSACRHAGLVEKGLKYFNVMESEYGINPDRDIYNCVVDLLGRAGKIGEAYELVERMPFKPDESTWGAILGACKAHKHNGLISRLAARKVMELKPKMVGTYVMLSYIYAAEGKWVDFARVRKMMRMMGNKKEAGMSWILVENQVFSFAVSDKMCPNASSVYSVLGLLIEETREAGYVPELDSLVNDQEVGT</sequence>
<comment type="similarity">
    <text evidence="1">Belongs to the PPR family. PCMP-E subfamily.</text>
</comment>
<comment type="online information" name="Pentatricopeptide repeat proteins">
    <link uri="https://ppr.plantenergy.uwa.edu.au"/>
</comment>
<reference key="1">
    <citation type="journal article" date="2000" name="Nature">
        <title>Sequence and analysis of chromosome 1 of the plant Arabidopsis thaliana.</title>
        <authorList>
            <person name="Theologis A."/>
            <person name="Ecker J.R."/>
            <person name="Palm C.J."/>
            <person name="Federspiel N.A."/>
            <person name="Kaul S."/>
            <person name="White O."/>
            <person name="Alonso J."/>
            <person name="Altafi H."/>
            <person name="Araujo R."/>
            <person name="Bowman C.L."/>
            <person name="Brooks S.Y."/>
            <person name="Buehler E."/>
            <person name="Chan A."/>
            <person name="Chao Q."/>
            <person name="Chen H."/>
            <person name="Cheuk R.F."/>
            <person name="Chin C.W."/>
            <person name="Chung M.K."/>
            <person name="Conn L."/>
            <person name="Conway A.B."/>
            <person name="Conway A.R."/>
            <person name="Creasy T.H."/>
            <person name="Dewar K."/>
            <person name="Dunn P."/>
            <person name="Etgu P."/>
            <person name="Feldblyum T.V."/>
            <person name="Feng J.-D."/>
            <person name="Fong B."/>
            <person name="Fujii C.Y."/>
            <person name="Gill J.E."/>
            <person name="Goldsmith A.D."/>
            <person name="Haas B."/>
            <person name="Hansen N.F."/>
            <person name="Hughes B."/>
            <person name="Huizar L."/>
            <person name="Hunter J.L."/>
            <person name="Jenkins J."/>
            <person name="Johnson-Hopson C."/>
            <person name="Khan S."/>
            <person name="Khaykin E."/>
            <person name="Kim C.J."/>
            <person name="Koo H.L."/>
            <person name="Kremenetskaia I."/>
            <person name="Kurtz D.B."/>
            <person name="Kwan A."/>
            <person name="Lam B."/>
            <person name="Langin-Hooper S."/>
            <person name="Lee A."/>
            <person name="Lee J.M."/>
            <person name="Lenz C.A."/>
            <person name="Li J.H."/>
            <person name="Li Y.-P."/>
            <person name="Lin X."/>
            <person name="Liu S.X."/>
            <person name="Liu Z.A."/>
            <person name="Luros J.S."/>
            <person name="Maiti R."/>
            <person name="Marziali A."/>
            <person name="Militscher J."/>
            <person name="Miranda M."/>
            <person name="Nguyen M."/>
            <person name="Nierman W.C."/>
            <person name="Osborne B.I."/>
            <person name="Pai G."/>
            <person name="Peterson J."/>
            <person name="Pham P.K."/>
            <person name="Rizzo M."/>
            <person name="Rooney T."/>
            <person name="Rowley D."/>
            <person name="Sakano H."/>
            <person name="Salzberg S.L."/>
            <person name="Schwartz J.R."/>
            <person name="Shinn P."/>
            <person name="Southwick A.M."/>
            <person name="Sun H."/>
            <person name="Tallon L.J."/>
            <person name="Tambunga G."/>
            <person name="Toriumi M.J."/>
            <person name="Town C.D."/>
            <person name="Utterback T."/>
            <person name="Van Aken S."/>
            <person name="Vaysberg M."/>
            <person name="Vysotskaia V.S."/>
            <person name="Walker M."/>
            <person name="Wu D."/>
            <person name="Yu G."/>
            <person name="Fraser C.M."/>
            <person name="Venter J.C."/>
            <person name="Davis R.W."/>
        </authorList>
    </citation>
    <scope>NUCLEOTIDE SEQUENCE [LARGE SCALE GENOMIC DNA]</scope>
    <source>
        <strain>cv. Columbia</strain>
    </source>
</reference>
<reference key="2">
    <citation type="journal article" date="2017" name="Plant J.">
        <title>Araport11: a complete reannotation of the Arabidopsis thaliana reference genome.</title>
        <authorList>
            <person name="Cheng C.Y."/>
            <person name="Krishnakumar V."/>
            <person name="Chan A.P."/>
            <person name="Thibaud-Nissen F."/>
            <person name="Schobel S."/>
            <person name="Town C.D."/>
        </authorList>
    </citation>
    <scope>GENOME REANNOTATION</scope>
    <source>
        <strain>cv. Columbia</strain>
    </source>
</reference>
<reference key="3">
    <citation type="journal article" date="2004" name="Plant Cell">
        <title>Genome-wide analysis of Arabidopsis pentatricopeptide repeat proteins reveals their essential role in organelle biogenesis.</title>
        <authorList>
            <person name="Lurin C."/>
            <person name="Andres C."/>
            <person name="Aubourg S."/>
            <person name="Bellaoui M."/>
            <person name="Bitton F."/>
            <person name="Bruyere C."/>
            <person name="Caboche M."/>
            <person name="Debast C."/>
            <person name="Gualberto J."/>
            <person name="Hoffmann B."/>
            <person name="Lecharny A."/>
            <person name="Le Ret M."/>
            <person name="Martin-Magniette M.-L."/>
            <person name="Mireau H."/>
            <person name="Peeters N."/>
            <person name="Renou J.-P."/>
            <person name="Szurek B."/>
            <person name="Taconnat L."/>
            <person name="Small I."/>
        </authorList>
    </citation>
    <scope>GENE FAMILY</scope>
</reference>
<name>PPR83_ARATH</name>